<keyword id="KW-0150">Chloroplast</keyword>
<keyword id="KW-0507">mRNA processing</keyword>
<keyword id="KW-0934">Plastid</keyword>
<keyword id="KW-0694">RNA-binding</keyword>
<keyword id="KW-0819">tRNA processing</keyword>
<evidence type="ECO:0000255" key="1">
    <source>
        <dbReference type="HAMAP-Rule" id="MF_01390"/>
    </source>
</evidence>
<proteinExistence type="inferred from homology"/>
<name>MATK_EUCGL</name>
<geneLocation type="chloroplast"/>
<reference key="1">
    <citation type="journal article" date="2005" name="Plant Syst. Evol.">
        <title>Relationships within Myrtaceae sensu lato based on a matK phylogeny.</title>
        <authorList>
            <person name="Wilson P.G."/>
            <person name="O'Brien M.M."/>
            <person name="Heslewood M.M."/>
            <person name="Quinn C.J."/>
        </authorList>
    </citation>
    <scope>NUCLEOTIDE SEQUENCE [GENOMIC DNA]</scope>
</reference>
<gene>
    <name evidence="1" type="primary">matK</name>
</gene>
<feature type="chain" id="PRO_0000143380" description="Maturase K">
    <location>
        <begin position="1"/>
        <end position="503"/>
    </location>
</feature>
<organism>
    <name type="scientific">Eucalyptus globulus</name>
    <name type="common">Tasmanian blue gum</name>
    <dbReference type="NCBI Taxonomy" id="34317"/>
    <lineage>
        <taxon>Eukaryota</taxon>
        <taxon>Viridiplantae</taxon>
        <taxon>Streptophyta</taxon>
        <taxon>Embryophyta</taxon>
        <taxon>Tracheophyta</taxon>
        <taxon>Spermatophyta</taxon>
        <taxon>Magnoliopsida</taxon>
        <taxon>eudicotyledons</taxon>
        <taxon>Gunneridae</taxon>
        <taxon>Pentapetalae</taxon>
        <taxon>rosids</taxon>
        <taxon>malvids</taxon>
        <taxon>Myrtales</taxon>
        <taxon>Myrtaceae</taxon>
        <taxon>Myrtoideae</taxon>
        <taxon>Eucalypteae</taxon>
        <taxon>Eucalyptus</taxon>
    </lineage>
</organism>
<comment type="function">
    <text evidence="1">Usually encoded in the trnK tRNA gene intron. Probably assists in splicing its own and other chloroplast group II introns.</text>
</comment>
<comment type="subcellular location">
    <subcellularLocation>
        <location>Plastid</location>
        <location>Chloroplast</location>
    </subcellularLocation>
</comment>
<comment type="similarity">
    <text evidence="1">Belongs to the intron maturase 2 family. MatK subfamily.</text>
</comment>
<accession>Q5GIZ6</accession>
<protein>
    <recommendedName>
        <fullName evidence="1">Maturase K</fullName>
    </recommendedName>
    <alternativeName>
        <fullName evidence="1">Intron maturase</fullName>
    </alternativeName>
</protein>
<sequence length="503" mass="60125">MEEFQGYFELDRSRQHDFLYPLLFREYIYALAHDHGLKKSILFENAGYDNKSSSIIVKRLITRMYQQNPLIFSANDSIQNPFFGQNKNFYSQIISEGFAVIVEIPFSLRLVSSLERKEIAKSHKLRAIHSIFPFLEDKFSHLDYVSDVLIPYHIHLEILVQTLRYWVNDASSLHLLRFFLHEYWNSLITQKNHITIFSKGNPRLFLFLYNSHICEYEYFFLFLRNQSSHLRSTSSGIFFERIYFYVKIEHFVKVFFDNDFQCILWFFKDPFMHYVRYQGKSILASKDTPLLMKKWKYYLVNLWQYHFYVWFQPGRIDINQLCKYSLYFLGYRSSVRLNSSVVRSQMLENSFLINNAMKKFETIVPIIPLIGSLSKANFCDTLGHPISKPTRADSSDSDIIDRFLRISRNLSHYHSGSSKKKSLYRVKYILRLSCVKTLARKHKKTVRTFLKRLGSEFLEEFLTEEEVVLSLIFPRTYSTSRRLYRGRIWYLDITSINDLVNYE</sequence>
<dbReference type="EMBL" id="AY521535">
    <property type="protein sequence ID" value="AAS98897.1"/>
    <property type="molecule type" value="Genomic_DNA"/>
</dbReference>
<dbReference type="GO" id="GO:0009507">
    <property type="term" value="C:chloroplast"/>
    <property type="evidence" value="ECO:0007669"/>
    <property type="project" value="UniProtKB-SubCell"/>
</dbReference>
<dbReference type="GO" id="GO:0003723">
    <property type="term" value="F:RNA binding"/>
    <property type="evidence" value="ECO:0007669"/>
    <property type="project" value="UniProtKB-KW"/>
</dbReference>
<dbReference type="GO" id="GO:0006397">
    <property type="term" value="P:mRNA processing"/>
    <property type="evidence" value="ECO:0007669"/>
    <property type="project" value="UniProtKB-KW"/>
</dbReference>
<dbReference type="GO" id="GO:0008380">
    <property type="term" value="P:RNA splicing"/>
    <property type="evidence" value="ECO:0007669"/>
    <property type="project" value="UniProtKB-UniRule"/>
</dbReference>
<dbReference type="GO" id="GO:0008033">
    <property type="term" value="P:tRNA processing"/>
    <property type="evidence" value="ECO:0007669"/>
    <property type="project" value="UniProtKB-KW"/>
</dbReference>
<dbReference type="HAMAP" id="MF_01390">
    <property type="entry name" value="MatK"/>
    <property type="match status" value="1"/>
</dbReference>
<dbReference type="InterPro" id="IPR024937">
    <property type="entry name" value="Domain_X"/>
</dbReference>
<dbReference type="InterPro" id="IPR002866">
    <property type="entry name" value="Maturase_MatK"/>
</dbReference>
<dbReference type="InterPro" id="IPR024942">
    <property type="entry name" value="Maturase_MatK_N"/>
</dbReference>
<dbReference type="PANTHER" id="PTHR34811">
    <property type="entry name" value="MATURASE K"/>
    <property type="match status" value="1"/>
</dbReference>
<dbReference type="PANTHER" id="PTHR34811:SF1">
    <property type="entry name" value="MATURASE K"/>
    <property type="match status" value="1"/>
</dbReference>
<dbReference type="Pfam" id="PF01348">
    <property type="entry name" value="Intron_maturas2"/>
    <property type="match status" value="1"/>
</dbReference>
<dbReference type="Pfam" id="PF01824">
    <property type="entry name" value="MatK_N"/>
    <property type="match status" value="1"/>
</dbReference>